<feature type="chain" id="PRO_0000266591" description="Large ribosomal subunit protein uL14">
    <location>
        <begin position="1"/>
        <end position="123"/>
    </location>
</feature>
<sequence>MIQEQTMLNVADNSGARRVMCIKVLGGSHRRYAGIGDIIKITIKEAIPRGKVKKGDVLKAVVVRTKKGVRRPDGSVIRFDGNACVILNNNSEQPIGTRIFGPVTRELRNEKFMKIISLAPEVL</sequence>
<name>RL14_YERPE</name>
<protein>
    <recommendedName>
        <fullName evidence="1">Large ribosomal subunit protein uL14</fullName>
    </recommendedName>
    <alternativeName>
        <fullName evidence="2">50S ribosomal protein L14</fullName>
    </alternativeName>
</protein>
<proteinExistence type="inferred from homology"/>
<dbReference type="EMBL" id="AE009952">
    <property type="protein sequence ID" value="AAM87543.1"/>
    <property type="molecule type" value="Genomic_DNA"/>
</dbReference>
<dbReference type="EMBL" id="AL590842">
    <property type="protein sequence ID" value="CAL18902.1"/>
    <property type="molecule type" value="Genomic_DNA"/>
</dbReference>
<dbReference type="EMBL" id="AE017042">
    <property type="protein sequence ID" value="AAS60493.1"/>
    <property type="molecule type" value="Genomic_DNA"/>
</dbReference>
<dbReference type="PIR" id="AD0027">
    <property type="entry name" value="AD0027"/>
</dbReference>
<dbReference type="RefSeq" id="WP_002213325.1">
    <property type="nucleotide sequence ID" value="NZ_WUCM01000078.1"/>
</dbReference>
<dbReference type="RefSeq" id="YP_002345300.1">
    <property type="nucleotide sequence ID" value="NC_003143.1"/>
</dbReference>
<dbReference type="SMR" id="Q7CFT7"/>
<dbReference type="STRING" id="214092.YPO0220"/>
<dbReference type="PaxDb" id="214092-YPO0220"/>
<dbReference type="DNASU" id="1148946"/>
<dbReference type="EnsemblBacteria" id="AAS60493">
    <property type="protein sequence ID" value="AAS60493"/>
    <property type="gene ID" value="YP_0217"/>
</dbReference>
<dbReference type="GeneID" id="97454241"/>
<dbReference type="KEGG" id="ype:YPO0220"/>
<dbReference type="KEGG" id="ypk:y3999"/>
<dbReference type="KEGG" id="ypm:YP_0217"/>
<dbReference type="PATRIC" id="fig|214092.21.peg.448"/>
<dbReference type="eggNOG" id="COG0093">
    <property type="taxonomic scope" value="Bacteria"/>
</dbReference>
<dbReference type="HOGENOM" id="CLU_095071_2_1_6"/>
<dbReference type="OMA" id="MIQMQTR"/>
<dbReference type="OrthoDB" id="9806379at2"/>
<dbReference type="Proteomes" id="UP000000815">
    <property type="component" value="Chromosome"/>
</dbReference>
<dbReference type="Proteomes" id="UP000001019">
    <property type="component" value="Chromosome"/>
</dbReference>
<dbReference type="Proteomes" id="UP000002490">
    <property type="component" value="Chromosome"/>
</dbReference>
<dbReference type="GO" id="GO:0022625">
    <property type="term" value="C:cytosolic large ribosomal subunit"/>
    <property type="evidence" value="ECO:0000318"/>
    <property type="project" value="GO_Central"/>
</dbReference>
<dbReference type="GO" id="GO:0070180">
    <property type="term" value="F:large ribosomal subunit rRNA binding"/>
    <property type="evidence" value="ECO:0000318"/>
    <property type="project" value="GO_Central"/>
</dbReference>
<dbReference type="GO" id="GO:0003735">
    <property type="term" value="F:structural constituent of ribosome"/>
    <property type="evidence" value="ECO:0000318"/>
    <property type="project" value="GO_Central"/>
</dbReference>
<dbReference type="GO" id="GO:0006412">
    <property type="term" value="P:translation"/>
    <property type="evidence" value="ECO:0007669"/>
    <property type="project" value="UniProtKB-UniRule"/>
</dbReference>
<dbReference type="CDD" id="cd00337">
    <property type="entry name" value="Ribosomal_uL14"/>
    <property type="match status" value="1"/>
</dbReference>
<dbReference type="FunFam" id="2.40.150.20:FF:000001">
    <property type="entry name" value="50S ribosomal protein L14"/>
    <property type="match status" value="1"/>
</dbReference>
<dbReference type="Gene3D" id="2.40.150.20">
    <property type="entry name" value="Ribosomal protein L14"/>
    <property type="match status" value="1"/>
</dbReference>
<dbReference type="HAMAP" id="MF_01367">
    <property type="entry name" value="Ribosomal_uL14"/>
    <property type="match status" value="1"/>
</dbReference>
<dbReference type="InterPro" id="IPR000218">
    <property type="entry name" value="Ribosomal_uL14"/>
</dbReference>
<dbReference type="InterPro" id="IPR005745">
    <property type="entry name" value="Ribosomal_uL14_bac-type"/>
</dbReference>
<dbReference type="InterPro" id="IPR019972">
    <property type="entry name" value="Ribosomal_uL14_CS"/>
</dbReference>
<dbReference type="InterPro" id="IPR036853">
    <property type="entry name" value="Ribosomal_uL14_sf"/>
</dbReference>
<dbReference type="NCBIfam" id="TIGR01067">
    <property type="entry name" value="rplN_bact"/>
    <property type="match status" value="1"/>
</dbReference>
<dbReference type="PANTHER" id="PTHR11761">
    <property type="entry name" value="50S/60S RIBOSOMAL PROTEIN L14/L23"/>
    <property type="match status" value="1"/>
</dbReference>
<dbReference type="PANTHER" id="PTHR11761:SF3">
    <property type="entry name" value="LARGE RIBOSOMAL SUBUNIT PROTEIN UL14M"/>
    <property type="match status" value="1"/>
</dbReference>
<dbReference type="Pfam" id="PF00238">
    <property type="entry name" value="Ribosomal_L14"/>
    <property type="match status" value="1"/>
</dbReference>
<dbReference type="SMART" id="SM01374">
    <property type="entry name" value="Ribosomal_L14"/>
    <property type="match status" value="1"/>
</dbReference>
<dbReference type="SUPFAM" id="SSF50193">
    <property type="entry name" value="Ribosomal protein L14"/>
    <property type="match status" value="1"/>
</dbReference>
<dbReference type="PROSITE" id="PS00049">
    <property type="entry name" value="RIBOSOMAL_L14"/>
    <property type="match status" value="1"/>
</dbReference>
<reference key="1">
    <citation type="journal article" date="2002" name="J. Bacteriol.">
        <title>Genome sequence of Yersinia pestis KIM.</title>
        <authorList>
            <person name="Deng W."/>
            <person name="Burland V."/>
            <person name="Plunkett G. III"/>
            <person name="Boutin A."/>
            <person name="Mayhew G.F."/>
            <person name="Liss P."/>
            <person name="Perna N.T."/>
            <person name="Rose D.J."/>
            <person name="Mau B."/>
            <person name="Zhou S."/>
            <person name="Schwartz D.C."/>
            <person name="Fetherston J.D."/>
            <person name="Lindler L.E."/>
            <person name="Brubaker R.R."/>
            <person name="Plano G.V."/>
            <person name="Straley S.C."/>
            <person name="McDonough K.A."/>
            <person name="Nilles M.L."/>
            <person name="Matson J.S."/>
            <person name="Blattner F.R."/>
            <person name="Perry R.D."/>
        </authorList>
    </citation>
    <scope>NUCLEOTIDE SEQUENCE [LARGE SCALE GENOMIC DNA]</scope>
    <source>
        <strain>KIM10+ / Biovar Mediaevalis</strain>
    </source>
</reference>
<reference key="2">
    <citation type="journal article" date="2001" name="Nature">
        <title>Genome sequence of Yersinia pestis, the causative agent of plague.</title>
        <authorList>
            <person name="Parkhill J."/>
            <person name="Wren B.W."/>
            <person name="Thomson N.R."/>
            <person name="Titball R.W."/>
            <person name="Holden M.T.G."/>
            <person name="Prentice M.B."/>
            <person name="Sebaihia M."/>
            <person name="James K.D."/>
            <person name="Churcher C.M."/>
            <person name="Mungall K.L."/>
            <person name="Baker S."/>
            <person name="Basham D."/>
            <person name="Bentley S.D."/>
            <person name="Brooks K."/>
            <person name="Cerdeno-Tarraga A.-M."/>
            <person name="Chillingworth T."/>
            <person name="Cronin A."/>
            <person name="Davies R.M."/>
            <person name="Davis P."/>
            <person name="Dougan G."/>
            <person name="Feltwell T."/>
            <person name="Hamlin N."/>
            <person name="Holroyd S."/>
            <person name="Jagels K."/>
            <person name="Karlyshev A.V."/>
            <person name="Leather S."/>
            <person name="Moule S."/>
            <person name="Oyston P.C.F."/>
            <person name="Quail M.A."/>
            <person name="Rutherford K.M."/>
            <person name="Simmonds M."/>
            <person name="Skelton J."/>
            <person name="Stevens K."/>
            <person name="Whitehead S."/>
            <person name="Barrell B.G."/>
        </authorList>
    </citation>
    <scope>NUCLEOTIDE SEQUENCE [LARGE SCALE GENOMIC DNA]</scope>
    <source>
        <strain>CO-92 / Biovar Orientalis</strain>
    </source>
</reference>
<reference key="3">
    <citation type="journal article" date="2004" name="DNA Res.">
        <title>Complete genome sequence of Yersinia pestis strain 91001, an isolate avirulent to humans.</title>
        <authorList>
            <person name="Song Y."/>
            <person name="Tong Z."/>
            <person name="Wang J."/>
            <person name="Wang L."/>
            <person name="Guo Z."/>
            <person name="Han Y."/>
            <person name="Zhang J."/>
            <person name="Pei D."/>
            <person name="Zhou D."/>
            <person name="Qin H."/>
            <person name="Pang X."/>
            <person name="Han Y."/>
            <person name="Zhai J."/>
            <person name="Li M."/>
            <person name="Cui B."/>
            <person name="Qi Z."/>
            <person name="Jin L."/>
            <person name="Dai R."/>
            <person name="Chen F."/>
            <person name="Li S."/>
            <person name="Ye C."/>
            <person name="Du Z."/>
            <person name="Lin W."/>
            <person name="Wang J."/>
            <person name="Yu J."/>
            <person name="Yang H."/>
            <person name="Wang J."/>
            <person name="Huang P."/>
            <person name="Yang R."/>
        </authorList>
    </citation>
    <scope>NUCLEOTIDE SEQUENCE [LARGE SCALE GENOMIC DNA]</scope>
    <source>
        <strain>91001 / Biovar Mediaevalis</strain>
    </source>
</reference>
<organism>
    <name type="scientific">Yersinia pestis</name>
    <dbReference type="NCBI Taxonomy" id="632"/>
    <lineage>
        <taxon>Bacteria</taxon>
        <taxon>Pseudomonadati</taxon>
        <taxon>Pseudomonadota</taxon>
        <taxon>Gammaproteobacteria</taxon>
        <taxon>Enterobacterales</taxon>
        <taxon>Yersiniaceae</taxon>
        <taxon>Yersinia</taxon>
    </lineage>
</organism>
<gene>
    <name evidence="1" type="primary">rplN</name>
    <name type="ordered locus">YPO0220</name>
    <name type="ordered locus">y3999</name>
    <name type="ordered locus">YP_0217</name>
</gene>
<keyword id="KW-1185">Reference proteome</keyword>
<keyword id="KW-0687">Ribonucleoprotein</keyword>
<keyword id="KW-0689">Ribosomal protein</keyword>
<keyword id="KW-0694">RNA-binding</keyword>
<keyword id="KW-0699">rRNA-binding</keyword>
<evidence type="ECO:0000255" key="1">
    <source>
        <dbReference type="HAMAP-Rule" id="MF_01367"/>
    </source>
</evidence>
<evidence type="ECO:0000305" key="2"/>
<comment type="function">
    <text evidence="1">Binds to 23S rRNA. Forms part of two intersubunit bridges in the 70S ribosome.</text>
</comment>
<comment type="subunit">
    <text evidence="1">Part of the 50S ribosomal subunit. Forms a cluster with proteins L3 and L19. In the 70S ribosome, L14 and L19 interact and together make contacts with the 16S rRNA in bridges B5 and B8.</text>
</comment>
<comment type="similarity">
    <text evidence="1">Belongs to the universal ribosomal protein uL14 family.</text>
</comment>
<accession>Q7CFT7</accession>
<accession>Q74XY8</accession>